<dbReference type="EC" id="2.1.2.9" evidence="1"/>
<dbReference type="EMBL" id="CP000227">
    <property type="protein sequence ID" value="ACM14079.1"/>
    <property type="molecule type" value="Genomic_DNA"/>
</dbReference>
<dbReference type="SMR" id="B9IVF5"/>
<dbReference type="KEGG" id="bcq:BCQ_3651"/>
<dbReference type="HOGENOM" id="CLU_033347_1_1_9"/>
<dbReference type="Proteomes" id="UP000000441">
    <property type="component" value="Chromosome"/>
</dbReference>
<dbReference type="GO" id="GO:0005829">
    <property type="term" value="C:cytosol"/>
    <property type="evidence" value="ECO:0007669"/>
    <property type="project" value="TreeGrafter"/>
</dbReference>
<dbReference type="GO" id="GO:0004479">
    <property type="term" value="F:methionyl-tRNA formyltransferase activity"/>
    <property type="evidence" value="ECO:0007669"/>
    <property type="project" value="UniProtKB-UniRule"/>
</dbReference>
<dbReference type="CDD" id="cd08646">
    <property type="entry name" value="FMT_core_Met-tRNA-FMT_N"/>
    <property type="match status" value="1"/>
</dbReference>
<dbReference type="CDD" id="cd08704">
    <property type="entry name" value="Met_tRNA_FMT_C"/>
    <property type="match status" value="1"/>
</dbReference>
<dbReference type="FunFam" id="3.10.25.10:FF:000003">
    <property type="entry name" value="Methionyl-tRNA formyltransferase"/>
    <property type="match status" value="1"/>
</dbReference>
<dbReference type="FunFam" id="3.40.50.170:FF:000004">
    <property type="entry name" value="Methionyl-tRNA formyltransferase"/>
    <property type="match status" value="1"/>
</dbReference>
<dbReference type="Gene3D" id="3.10.25.10">
    <property type="entry name" value="Formyl transferase, C-terminal domain"/>
    <property type="match status" value="1"/>
</dbReference>
<dbReference type="Gene3D" id="3.40.50.170">
    <property type="entry name" value="Formyl transferase, N-terminal domain"/>
    <property type="match status" value="1"/>
</dbReference>
<dbReference type="HAMAP" id="MF_00182">
    <property type="entry name" value="Formyl_trans"/>
    <property type="match status" value="1"/>
</dbReference>
<dbReference type="InterPro" id="IPR005794">
    <property type="entry name" value="Fmt"/>
</dbReference>
<dbReference type="InterPro" id="IPR005793">
    <property type="entry name" value="Formyl_trans_C"/>
</dbReference>
<dbReference type="InterPro" id="IPR037022">
    <property type="entry name" value="Formyl_trans_C_sf"/>
</dbReference>
<dbReference type="InterPro" id="IPR002376">
    <property type="entry name" value="Formyl_transf_N"/>
</dbReference>
<dbReference type="InterPro" id="IPR036477">
    <property type="entry name" value="Formyl_transf_N_sf"/>
</dbReference>
<dbReference type="InterPro" id="IPR011034">
    <property type="entry name" value="Formyl_transferase-like_C_sf"/>
</dbReference>
<dbReference type="InterPro" id="IPR001555">
    <property type="entry name" value="GART_AS"/>
</dbReference>
<dbReference type="InterPro" id="IPR044135">
    <property type="entry name" value="Met-tRNA-FMT_C"/>
</dbReference>
<dbReference type="InterPro" id="IPR041711">
    <property type="entry name" value="Met-tRNA-FMT_N"/>
</dbReference>
<dbReference type="NCBIfam" id="TIGR00460">
    <property type="entry name" value="fmt"/>
    <property type="match status" value="1"/>
</dbReference>
<dbReference type="PANTHER" id="PTHR11138">
    <property type="entry name" value="METHIONYL-TRNA FORMYLTRANSFERASE"/>
    <property type="match status" value="1"/>
</dbReference>
<dbReference type="PANTHER" id="PTHR11138:SF5">
    <property type="entry name" value="METHIONYL-TRNA FORMYLTRANSFERASE, MITOCHONDRIAL"/>
    <property type="match status" value="1"/>
</dbReference>
<dbReference type="Pfam" id="PF02911">
    <property type="entry name" value="Formyl_trans_C"/>
    <property type="match status" value="1"/>
</dbReference>
<dbReference type="Pfam" id="PF00551">
    <property type="entry name" value="Formyl_trans_N"/>
    <property type="match status" value="1"/>
</dbReference>
<dbReference type="SUPFAM" id="SSF50486">
    <property type="entry name" value="FMT C-terminal domain-like"/>
    <property type="match status" value="1"/>
</dbReference>
<dbReference type="SUPFAM" id="SSF53328">
    <property type="entry name" value="Formyltransferase"/>
    <property type="match status" value="1"/>
</dbReference>
<dbReference type="PROSITE" id="PS00373">
    <property type="entry name" value="GART"/>
    <property type="match status" value="1"/>
</dbReference>
<organism>
    <name type="scientific">Bacillus cereus (strain Q1)</name>
    <dbReference type="NCBI Taxonomy" id="361100"/>
    <lineage>
        <taxon>Bacteria</taxon>
        <taxon>Bacillati</taxon>
        <taxon>Bacillota</taxon>
        <taxon>Bacilli</taxon>
        <taxon>Bacillales</taxon>
        <taxon>Bacillaceae</taxon>
        <taxon>Bacillus</taxon>
        <taxon>Bacillus cereus group</taxon>
    </lineage>
</organism>
<protein>
    <recommendedName>
        <fullName evidence="1">Methionyl-tRNA formyltransferase</fullName>
        <ecNumber evidence="1">2.1.2.9</ecNumber>
    </recommendedName>
</protein>
<proteinExistence type="inferred from homology"/>
<feature type="chain" id="PRO_1000190006" description="Methionyl-tRNA formyltransferase">
    <location>
        <begin position="1"/>
        <end position="314"/>
    </location>
</feature>
<feature type="binding site" evidence="1">
    <location>
        <begin position="110"/>
        <end position="113"/>
    </location>
    <ligand>
        <name>(6S)-5,6,7,8-tetrahydrofolate</name>
        <dbReference type="ChEBI" id="CHEBI:57453"/>
    </ligand>
</feature>
<gene>
    <name evidence="1" type="primary">fmt</name>
    <name type="ordered locus">BCQ_3651</name>
</gene>
<accession>B9IVF5</accession>
<evidence type="ECO:0000255" key="1">
    <source>
        <dbReference type="HAMAP-Rule" id="MF_00182"/>
    </source>
</evidence>
<keyword id="KW-0648">Protein biosynthesis</keyword>
<keyword id="KW-0808">Transferase</keyword>
<comment type="function">
    <text evidence="1">Attaches a formyl group to the free amino group of methionyl-tRNA(fMet). The formyl group appears to play a dual role in the initiator identity of N-formylmethionyl-tRNA by promoting its recognition by IF2 and preventing the misappropriation of this tRNA by the elongation apparatus.</text>
</comment>
<comment type="catalytic activity">
    <reaction evidence="1">
        <text>L-methionyl-tRNA(fMet) + (6R)-10-formyltetrahydrofolate = N-formyl-L-methionyl-tRNA(fMet) + (6S)-5,6,7,8-tetrahydrofolate + H(+)</text>
        <dbReference type="Rhea" id="RHEA:24380"/>
        <dbReference type="Rhea" id="RHEA-COMP:9952"/>
        <dbReference type="Rhea" id="RHEA-COMP:9953"/>
        <dbReference type="ChEBI" id="CHEBI:15378"/>
        <dbReference type="ChEBI" id="CHEBI:57453"/>
        <dbReference type="ChEBI" id="CHEBI:78530"/>
        <dbReference type="ChEBI" id="CHEBI:78844"/>
        <dbReference type="ChEBI" id="CHEBI:195366"/>
        <dbReference type="EC" id="2.1.2.9"/>
    </reaction>
</comment>
<comment type="similarity">
    <text evidence="1">Belongs to the Fmt family.</text>
</comment>
<reference key="1">
    <citation type="journal article" date="2009" name="J. Bacteriol.">
        <title>Complete genome sequence of the extremophilic Bacillus cereus strain Q1 with industrial applications.</title>
        <authorList>
            <person name="Xiong Z."/>
            <person name="Jiang Y."/>
            <person name="Qi D."/>
            <person name="Lu H."/>
            <person name="Yang F."/>
            <person name="Yang J."/>
            <person name="Chen L."/>
            <person name="Sun L."/>
            <person name="Xu X."/>
            <person name="Xue Y."/>
            <person name="Zhu Y."/>
            <person name="Jin Q."/>
        </authorList>
    </citation>
    <scope>NUCLEOTIDE SEQUENCE [LARGE SCALE GENOMIC DNA]</scope>
    <source>
        <strain>Q1</strain>
    </source>
</reference>
<sequence length="314" mass="34722">MIKVVFMGTPDFSVPVLRRLIEDGYDVIGVVTQPDRPVGRKKVLTPTPVKVEAEKHGIPVLQPLRIREKDEYEKVLALEPDLIVTAAFGQIVPNEILEAPKYGCINVHASLLPELRGGAPIHYAIMEGKEKTGITIMYMVEKLDAGDILTQVEVEIEERETTGSLFDKLSEAGAHLLSKTVPLLIQGKLEPIKQNEEEVTFAYNIKREQEKIDWTKTGEEVYNHIRGLNPWPVAYTTLAGQVVKVWWGEKVPVTKSAEAGTIVAIEEDGFVVATGNETGVKVTELQPSGKKRMSCSQFLRGTKPEIGTKLGENA</sequence>
<name>FMT_BACCQ</name>